<organism>
    <name type="scientific">Bacillus cereus (strain Q1)</name>
    <dbReference type="NCBI Taxonomy" id="361100"/>
    <lineage>
        <taxon>Bacteria</taxon>
        <taxon>Bacillati</taxon>
        <taxon>Bacillota</taxon>
        <taxon>Bacilli</taxon>
        <taxon>Bacillales</taxon>
        <taxon>Bacillaceae</taxon>
        <taxon>Bacillus</taxon>
        <taxon>Bacillus cereus group</taxon>
    </lineage>
</organism>
<evidence type="ECO:0000255" key="1">
    <source>
        <dbReference type="HAMAP-Rule" id="MF_00016"/>
    </source>
</evidence>
<keyword id="KW-0067">ATP-binding</keyword>
<keyword id="KW-0963">Cytoplasm</keyword>
<keyword id="KW-0227">DNA damage</keyword>
<keyword id="KW-0233">DNA recombination</keyword>
<keyword id="KW-0234">DNA repair</keyword>
<keyword id="KW-0238">DNA-binding</keyword>
<keyword id="KW-0378">Hydrolase</keyword>
<keyword id="KW-0547">Nucleotide-binding</keyword>
<proteinExistence type="inferred from homology"/>
<comment type="function">
    <text evidence="1">The RuvA-RuvB-RuvC complex processes Holliday junction (HJ) DNA during genetic recombination and DNA repair, while the RuvA-RuvB complex plays an important role in the rescue of blocked DNA replication forks via replication fork reversal (RFR). RuvA specifically binds to HJ cruciform DNA, conferring on it an open structure. The RuvB hexamer acts as an ATP-dependent pump, pulling dsDNA into and through the RuvAB complex. RuvB forms 2 homohexamers on either side of HJ DNA bound by 1 or 2 RuvA tetramers; 4 subunits per hexamer contact DNA at a time. Coordinated motions by a converter formed by DNA-disengaged RuvB subunits stimulates ATP hydrolysis and nucleotide exchange. Immobilization of the converter enables RuvB to convert the ATP-contained energy into a lever motion, pulling 2 nucleotides of DNA out of the RuvA tetramer per ATP hydrolyzed, thus driving DNA branch migration. The RuvB motors rotate together with the DNA substrate, which together with the progressing nucleotide cycle form the mechanistic basis for DNA recombination by continuous HJ branch migration. Branch migration allows RuvC to scan DNA until it finds its consensus sequence, where it cleaves and resolves cruciform DNA.</text>
</comment>
<comment type="catalytic activity">
    <reaction evidence="1">
        <text>ATP + H2O = ADP + phosphate + H(+)</text>
        <dbReference type="Rhea" id="RHEA:13065"/>
        <dbReference type="ChEBI" id="CHEBI:15377"/>
        <dbReference type="ChEBI" id="CHEBI:15378"/>
        <dbReference type="ChEBI" id="CHEBI:30616"/>
        <dbReference type="ChEBI" id="CHEBI:43474"/>
        <dbReference type="ChEBI" id="CHEBI:456216"/>
    </reaction>
</comment>
<comment type="subunit">
    <text evidence="1">Homohexamer. Forms an RuvA(8)-RuvB(12)-Holliday junction (HJ) complex. HJ DNA is sandwiched between 2 RuvA tetramers; dsDNA enters through RuvA and exits via RuvB. An RuvB hexamer assembles on each DNA strand where it exits the tetramer. Each RuvB hexamer is contacted by two RuvA subunits (via domain III) on 2 adjacent RuvB subunits; this complex drives branch migration. In the full resolvosome a probable DNA-RuvA(4)-RuvB(12)-RuvC(2) complex forms which resolves the HJ.</text>
</comment>
<comment type="subcellular location">
    <subcellularLocation>
        <location evidence="1">Cytoplasm</location>
    </subcellularLocation>
</comment>
<comment type="domain">
    <text evidence="1">Has 3 domains, the large (RuvB-L) and small ATPase (RuvB-S) domains and the C-terminal head (RuvB-H) domain. The head domain binds DNA, while the ATPase domains jointly bind ATP, ADP or are empty depending on the state of the subunit in the translocation cycle. During a single DNA translocation step the structure of each domain remains the same, but their relative positions change.</text>
</comment>
<comment type="similarity">
    <text evidence="1">Belongs to the RuvB family.</text>
</comment>
<accession>B9IYZ4</accession>
<dbReference type="EC" id="3.6.4.-" evidence="1"/>
<dbReference type="EMBL" id="CP000227">
    <property type="protein sequence ID" value="ACM14633.1"/>
    <property type="molecule type" value="Genomic_DNA"/>
</dbReference>
<dbReference type="SMR" id="B9IYZ4"/>
<dbReference type="KEGG" id="bcq:BCQ_4206"/>
<dbReference type="HOGENOM" id="CLU_055599_1_0_9"/>
<dbReference type="Proteomes" id="UP000000441">
    <property type="component" value="Chromosome"/>
</dbReference>
<dbReference type="GO" id="GO:0005737">
    <property type="term" value="C:cytoplasm"/>
    <property type="evidence" value="ECO:0007669"/>
    <property type="project" value="UniProtKB-SubCell"/>
</dbReference>
<dbReference type="GO" id="GO:0048476">
    <property type="term" value="C:Holliday junction resolvase complex"/>
    <property type="evidence" value="ECO:0007669"/>
    <property type="project" value="UniProtKB-UniRule"/>
</dbReference>
<dbReference type="GO" id="GO:0005524">
    <property type="term" value="F:ATP binding"/>
    <property type="evidence" value="ECO:0007669"/>
    <property type="project" value="UniProtKB-UniRule"/>
</dbReference>
<dbReference type="GO" id="GO:0016887">
    <property type="term" value="F:ATP hydrolysis activity"/>
    <property type="evidence" value="ECO:0007669"/>
    <property type="project" value="InterPro"/>
</dbReference>
<dbReference type="GO" id="GO:0000400">
    <property type="term" value="F:four-way junction DNA binding"/>
    <property type="evidence" value="ECO:0007669"/>
    <property type="project" value="UniProtKB-UniRule"/>
</dbReference>
<dbReference type="GO" id="GO:0009378">
    <property type="term" value="F:four-way junction helicase activity"/>
    <property type="evidence" value="ECO:0007669"/>
    <property type="project" value="InterPro"/>
</dbReference>
<dbReference type="GO" id="GO:0006310">
    <property type="term" value="P:DNA recombination"/>
    <property type="evidence" value="ECO:0007669"/>
    <property type="project" value="UniProtKB-UniRule"/>
</dbReference>
<dbReference type="GO" id="GO:0006281">
    <property type="term" value="P:DNA repair"/>
    <property type="evidence" value="ECO:0007669"/>
    <property type="project" value="UniProtKB-UniRule"/>
</dbReference>
<dbReference type="CDD" id="cd00009">
    <property type="entry name" value="AAA"/>
    <property type="match status" value="1"/>
</dbReference>
<dbReference type="Gene3D" id="1.10.8.60">
    <property type="match status" value="1"/>
</dbReference>
<dbReference type="Gene3D" id="3.40.50.300">
    <property type="entry name" value="P-loop containing nucleotide triphosphate hydrolases"/>
    <property type="match status" value="1"/>
</dbReference>
<dbReference type="Gene3D" id="1.10.10.10">
    <property type="entry name" value="Winged helix-like DNA-binding domain superfamily/Winged helix DNA-binding domain"/>
    <property type="match status" value="1"/>
</dbReference>
<dbReference type="HAMAP" id="MF_00016">
    <property type="entry name" value="DNA_HJ_migration_RuvB"/>
    <property type="match status" value="1"/>
</dbReference>
<dbReference type="InterPro" id="IPR003593">
    <property type="entry name" value="AAA+_ATPase"/>
</dbReference>
<dbReference type="InterPro" id="IPR041445">
    <property type="entry name" value="AAA_lid_4"/>
</dbReference>
<dbReference type="InterPro" id="IPR004605">
    <property type="entry name" value="DNA_helicase_Holl-junc_RuvB"/>
</dbReference>
<dbReference type="InterPro" id="IPR027417">
    <property type="entry name" value="P-loop_NTPase"/>
</dbReference>
<dbReference type="InterPro" id="IPR008824">
    <property type="entry name" value="RuvB-like_N"/>
</dbReference>
<dbReference type="InterPro" id="IPR008823">
    <property type="entry name" value="RuvB_C"/>
</dbReference>
<dbReference type="InterPro" id="IPR036388">
    <property type="entry name" value="WH-like_DNA-bd_sf"/>
</dbReference>
<dbReference type="InterPro" id="IPR036390">
    <property type="entry name" value="WH_DNA-bd_sf"/>
</dbReference>
<dbReference type="NCBIfam" id="NF000868">
    <property type="entry name" value="PRK00080.1"/>
    <property type="match status" value="1"/>
</dbReference>
<dbReference type="NCBIfam" id="TIGR00635">
    <property type="entry name" value="ruvB"/>
    <property type="match status" value="1"/>
</dbReference>
<dbReference type="PANTHER" id="PTHR42848">
    <property type="match status" value="1"/>
</dbReference>
<dbReference type="PANTHER" id="PTHR42848:SF1">
    <property type="entry name" value="HOLLIDAY JUNCTION BRANCH MIGRATION COMPLEX SUBUNIT RUVB"/>
    <property type="match status" value="1"/>
</dbReference>
<dbReference type="Pfam" id="PF17864">
    <property type="entry name" value="AAA_lid_4"/>
    <property type="match status" value="1"/>
</dbReference>
<dbReference type="Pfam" id="PF05491">
    <property type="entry name" value="RuvB_C"/>
    <property type="match status" value="1"/>
</dbReference>
<dbReference type="Pfam" id="PF05496">
    <property type="entry name" value="RuvB_N"/>
    <property type="match status" value="1"/>
</dbReference>
<dbReference type="SMART" id="SM00382">
    <property type="entry name" value="AAA"/>
    <property type="match status" value="1"/>
</dbReference>
<dbReference type="SUPFAM" id="SSF52540">
    <property type="entry name" value="P-loop containing nucleoside triphosphate hydrolases"/>
    <property type="match status" value="1"/>
</dbReference>
<dbReference type="SUPFAM" id="SSF46785">
    <property type="entry name" value="Winged helix' DNA-binding domain"/>
    <property type="match status" value="1"/>
</dbReference>
<protein>
    <recommendedName>
        <fullName evidence="1">Holliday junction branch migration complex subunit RuvB</fullName>
        <ecNumber evidence="1">3.6.4.-</ecNumber>
    </recommendedName>
</protein>
<sequence>MDERLLSGESAYEDADLEYSLRPQTLRQYIGQDKAKHNLEVFIEAAKMREETLDHVLLYGPPGLGKTTLANIIANEMGVNVRTTSGPAIERPGDLAAVLTSLQPGDVLFIDEIHRLHRSIEEVLYPAMEDFCLDIVIGKGPSARSVRLDLPPFTLVGATTRAGALSAPLRDRFGVLSRLEYYTVDQLSAIVERTAEVFEVEIDSLAALEIARRARGTPRIANRLLRRVRDFAQVRGNGTVTMEITQMALELLQVDKLGLDHIDHKLLLGIIEKFRGGPVGLETVSATIGEESHTIEDVYEPYLLQIGFLQRTPRGRIVTPLAYEHFGMEMPKV</sequence>
<feature type="chain" id="PRO_1000195202" description="Holliday junction branch migration complex subunit RuvB">
    <location>
        <begin position="1"/>
        <end position="333"/>
    </location>
</feature>
<feature type="region of interest" description="Large ATPase domain (RuvB-L)" evidence="1">
    <location>
        <begin position="1"/>
        <end position="182"/>
    </location>
</feature>
<feature type="region of interest" description="Small ATPAse domain (RuvB-S)" evidence="1">
    <location>
        <begin position="183"/>
        <end position="253"/>
    </location>
</feature>
<feature type="region of interest" description="Head domain (RuvB-H)" evidence="1">
    <location>
        <begin position="256"/>
        <end position="333"/>
    </location>
</feature>
<feature type="binding site" evidence="1">
    <location>
        <position position="21"/>
    </location>
    <ligand>
        <name>ATP</name>
        <dbReference type="ChEBI" id="CHEBI:30616"/>
    </ligand>
</feature>
<feature type="binding site" evidence="1">
    <location>
        <position position="22"/>
    </location>
    <ligand>
        <name>ATP</name>
        <dbReference type="ChEBI" id="CHEBI:30616"/>
    </ligand>
</feature>
<feature type="binding site" evidence="1">
    <location>
        <position position="63"/>
    </location>
    <ligand>
        <name>ATP</name>
        <dbReference type="ChEBI" id="CHEBI:30616"/>
    </ligand>
</feature>
<feature type="binding site" evidence="1">
    <location>
        <position position="66"/>
    </location>
    <ligand>
        <name>ATP</name>
        <dbReference type="ChEBI" id="CHEBI:30616"/>
    </ligand>
</feature>
<feature type="binding site" evidence="1">
    <location>
        <position position="67"/>
    </location>
    <ligand>
        <name>ATP</name>
        <dbReference type="ChEBI" id="CHEBI:30616"/>
    </ligand>
</feature>
<feature type="binding site" evidence="1">
    <location>
        <position position="67"/>
    </location>
    <ligand>
        <name>Mg(2+)</name>
        <dbReference type="ChEBI" id="CHEBI:18420"/>
    </ligand>
</feature>
<feature type="binding site" evidence="1">
    <location>
        <position position="68"/>
    </location>
    <ligand>
        <name>ATP</name>
        <dbReference type="ChEBI" id="CHEBI:30616"/>
    </ligand>
</feature>
<feature type="binding site" evidence="1">
    <location>
        <begin position="129"/>
        <end position="131"/>
    </location>
    <ligand>
        <name>ATP</name>
        <dbReference type="ChEBI" id="CHEBI:30616"/>
    </ligand>
</feature>
<feature type="binding site" evidence="1">
    <location>
        <position position="172"/>
    </location>
    <ligand>
        <name>ATP</name>
        <dbReference type="ChEBI" id="CHEBI:30616"/>
    </ligand>
</feature>
<feature type="binding site" evidence="1">
    <location>
        <position position="182"/>
    </location>
    <ligand>
        <name>ATP</name>
        <dbReference type="ChEBI" id="CHEBI:30616"/>
    </ligand>
</feature>
<feature type="binding site" evidence="1">
    <location>
        <position position="219"/>
    </location>
    <ligand>
        <name>ATP</name>
        <dbReference type="ChEBI" id="CHEBI:30616"/>
    </ligand>
</feature>
<feature type="binding site" evidence="1">
    <location>
        <position position="311"/>
    </location>
    <ligand>
        <name>DNA</name>
        <dbReference type="ChEBI" id="CHEBI:16991"/>
    </ligand>
</feature>
<feature type="binding site" evidence="1">
    <location>
        <position position="316"/>
    </location>
    <ligand>
        <name>DNA</name>
        <dbReference type="ChEBI" id="CHEBI:16991"/>
    </ligand>
</feature>
<reference key="1">
    <citation type="journal article" date="2009" name="J. Bacteriol.">
        <title>Complete genome sequence of the extremophilic Bacillus cereus strain Q1 with industrial applications.</title>
        <authorList>
            <person name="Xiong Z."/>
            <person name="Jiang Y."/>
            <person name="Qi D."/>
            <person name="Lu H."/>
            <person name="Yang F."/>
            <person name="Yang J."/>
            <person name="Chen L."/>
            <person name="Sun L."/>
            <person name="Xu X."/>
            <person name="Xue Y."/>
            <person name="Zhu Y."/>
            <person name="Jin Q."/>
        </authorList>
    </citation>
    <scope>NUCLEOTIDE SEQUENCE [LARGE SCALE GENOMIC DNA]</scope>
    <source>
        <strain>Q1</strain>
    </source>
</reference>
<name>RUVB_BACCQ</name>
<gene>
    <name evidence="1" type="primary">ruvB</name>
    <name type="ordered locus">BCQ_4206</name>
</gene>